<gene>
    <name evidence="1" type="primary">rpl39e</name>
    <name type="ordered locus">TSIB_0644</name>
</gene>
<name>RL39_THESM</name>
<feature type="chain" id="PRO_1000212328" description="Large ribosomal subunit protein eL39">
    <location>
        <begin position="1"/>
        <end position="51"/>
    </location>
</feature>
<sequence length="51" mass="6248">MARNKPIAKKLRLAKAAKQNRRIPVWVIVKTNRKVLTHPKRRYWRRTKLKE</sequence>
<keyword id="KW-1185">Reference proteome</keyword>
<keyword id="KW-0687">Ribonucleoprotein</keyword>
<keyword id="KW-0689">Ribosomal protein</keyword>
<proteinExistence type="inferred from homology"/>
<comment type="similarity">
    <text evidence="1">Belongs to the eukaryotic ribosomal protein eL39 family.</text>
</comment>
<accession>C6A264</accession>
<reference key="1">
    <citation type="journal article" date="2009" name="Appl. Environ. Microbiol.">
        <title>Metabolic versatility and indigenous origin of the archaeon Thermococcus sibiricus, isolated from a siberian oil reservoir, as revealed by genome analysis.</title>
        <authorList>
            <person name="Mardanov A.V."/>
            <person name="Ravin N.V."/>
            <person name="Svetlitchnyi V.A."/>
            <person name="Beletsky A.V."/>
            <person name="Miroshnichenko M.L."/>
            <person name="Bonch-Osmolovskaya E.A."/>
            <person name="Skryabin K.G."/>
        </authorList>
    </citation>
    <scope>NUCLEOTIDE SEQUENCE [LARGE SCALE GENOMIC DNA]</scope>
    <source>
        <strain>DSM 12597 / MM 739</strain>
    </source>
</reference>
<organism>
    <name type="scientific">Thermococcus sibiricus (strain DSM 12597 / MM 739)</name>
    <dbReference type="NCBI Taxonomy" id="604354"/>
    <lineage>
        <taxon>Archaea</taxon>
        <taxon>Methanobacteriati</taxon>
        <taxon>Methanobacteriota</taxon>
        <taxon>Thermococci</taxon>
        <taxon>Thermococcales</taxon>
        <taxon>Thermococcaceae</taxon>
        <taxon>Thermococcus</taxon>
    </lineage>
</organism>
<protein>
    <recommendedName>
        <fullName evidence="1">Large ribosomal subunit protein eL39</fullName>
    </recommendedName>
    <alternativeName>
        <fullName evidence="2">50S ribosomal protein L39e</fullName>
    </alternativeName>
</protein>
<dbReference type="EMBL" id="CP001463">
    <property type="protein sequence ID" value="ACS89709.1"/>
    <property type="molecule type" value="Genomic_DNA"/>
</dbReference>
<dbReference type="RefSeq" id="WP_015848929.1">
    <property type="nucleotide sequence ID" value="NC_012883.1"/>
</dbReference>
<dbReference type="SMR" id="C6A264"/>
<dbReference type="STRING" id="604354.TSIB_0644"/>
<dbReference type="GeneID" id="8095632"/>
<dbReference type="KEGG" id="tsi:TSIB_0644"/>
<dbReference type="eggNOG" id="arCOG04177">
    <property type="taxonomic scope" value="Archaea"/>
</dbReference>
<dbReference type="HOGENOM" id="CLU_181948_4_0_2"/>
<dbReference type="OrthoDB" id="65887at2157"/>
<dbReference type="Proteomes" id="UP000009079">
    <property type="component" value="Chromosome"/>
</dbReference>
<dbReference type="GO" id="GO:0022625">
    <property type="term" value="C:cytosolic large ribosomal subunit"/>
    <property type="evidence" value="ECO:0007669"/>
    <property type="project" value="TreeGrafter"/>
</dbReference>
<dbReference type="GO" id="GO:0003735">
    <property type="term" value="F:structural constituent of ribosome"/>
    <property type="evidence" value="ECO:0007669"/>
    <property type="project" value="InterPro"/>
</dbReference>
<dbReference type="GO" id="GO:0006412">
    <property type="term" value="P:translation"/>
    <property type="evidence" value="ECO:0007669"/>
    <property type="project" value="UniProtKB-UniRule"/>
</dbReference>
<dbReference type="FunFam" id="1.10.1620.10:FF:000001">
    <property type="entry name" value="60S ribosomal protein-like L39"/>
    <property type="match status" value="1"/>
</dbReference>
<dbReference type="Gene3D" id="1.10.1620.10">
    <property type="entry name" value="Ribosomal protein L39e"/>
    <property type="match status" value="1"/>
</dbReference>
<dbReference type="HAMAP" id="MF_00629">
    <property type="entry name" value="Ribosomal_eL39"/>
    <property type="match status" value="1"/>
</dbReference>
<dbReference type="InterPro" id="IPR000077">
    <property type="entry name" value="Ribosomal_eL39"/>
</dbReference>
<dbReference type="InterPro" id="IPR020083">
    <property type="entry name" value="Ribosomal_eL39_CS"/>
</dbReference>
<dbReference type="InterPro" id="IPR023626">
    <property type="entry name" value="Ribosomal_eL39_dom_sf"/>
</dbReference>
<dbReference type="NCBIfam" id="NF002316">
    <property type="entry name" value="PRK01242.1"/>
    <property type="match status" value="1"/>
</dbReference>
<dbReference type="PANTHER" id="PTHR19970:SF0">
    <property type="entry name" value="LARGE RIBOSOMAL SUBUNIT PROTEIN EL39"/>
    <property type="match status" value="1"/>
</dbReference>
<dbReference type="PANTHER" id="PTHR19970">
    <property type="entry name" value="RIBOSOMAL PROTEIN L39E"/>
    <property type="match status" value="1"/>
</dbReference>
<dbReference type="Pfam" id="PF00832">
    <property type="entry name" value="Ribosomal_L39"/>
    <property type="match status" value="1"/>
</dbReference>
<dbReference type="SUPFAM" id="SSF48662">
    <property type="entry name" value="Ribosomal protein L39e"/>
    <property type="match status" value="1"/>
</dbReference>
<dbReference type="PROSITE" id="PS00051">
    <property type="entry name" value="RIBOSOMAL_L39E"/>
    <property type="match status" value="1"/>
</dbReference>
<evidence type="ECO:0000255" key="1">
    <source>
        <dbReference type="HAMAP-Rule" id="MF_00629"/>
    </source>
</evidence>
<evidence type="ECO:0000305" key="2"/>